<dbReference type="EMBL" id="AE017347">
    <property type="protein sequence ID" value="AAW44870.1"/>
    <property type="molecule type" value="Genomic_DNA"/>
</dbReference>
<dbReference type="RefSeq" id="XP_572177.1">
    <property type="nucleotide sequence ID" value="XM_572177.1"/>
</dbReference>
<dbReference type="FunCoup" id="P0CP48">
    <property type="interactions" value="32"/>
</dbReference>
<dbReference type="STRING" id="214684.P0CP48"/>
<dbReference type="PaxDb" id="214684-P0CP48"/>
<dbReference type="EnsemblFungi" id="AAW44870">
    <property type="protein sequence ID" value="AAW44870"/>
    <property type="gene ID" value="CNG03540"/>
</dbReference>
<dbReference type="GeneID" id="3258958"/>
<dbReference type="KEGG" id="cne:CNG03540"/>
<dbReference type="VEuPathDB" id="FungiDB:CNG03540"/>
<dbReference type="eggNOG" id="ENOG502S1B1">
    <property type="taxonomic scope" value="Eukaryota"/>
</dbReference>
<dbReference type="HOGENOM" id="CLU_068297_2_0_1"/>
<dbReference type="InParanoid" id="P0CP48"/>
<dbReference type="OMA" id="MIFGFDP"/>
<dbReference type="OrthoDB" id="5970083at2759"/>
<dbReference type="Proteomes" id="UP000002149">
    <property type="component" value="Chromosome 7"/>
</dbReference>
<dbReference type="GO" id="GO:0001405">
    <property type="term" value="C:PAM complex, Tim23 associated import motor"/>
    <property type="evidence" value="ECO:0000318"/>
    <property type="project" value="GO_Central"/>
</dbReference>
<dbReference type="GO" id="GO:0030150">
    <property type="term" value="P:protein import into mitochondrial matrix"/>
    <property type="evidence" value="ECO:0000318"/>
    <property type="project" value="GO_Central"/>
</dbReference>
<dbReference type="InterPro" id="IPR013875">
    <property type="entry name" value="Pam17"/>
</dbReference>
<dbReference type="PANTHER" id="PTHR28021">
    <property type="entry name" value="PRESEQUENCE TRANSLOCATED-ASSOCIATED MOTOR SUBUNIT PAM17, MITOCHONDRIAL"/>
    <property type="match status" value="1"/>
</dbReference>
<dbReference type="PANTHER" id="PTHR28021:SF1">
    <property type="entry name" value="PRESEQUENCE TRANSLOCATED-ASSOCIATED MOTOR SUBUNIT PAM17, MITOCHONDRIAL"/>
    <property type="match status" value="1"/>
</dbReference>
<dbReference type="Pfam" id="PF08566">
    <property type="entry name" value="Pam17"/>
    <property type="match status" value="1"/>
</dbReference>
<accession>P0CP48</accession>
<accession>Q55PU1</accession>
<accession>Q5KDL4</accession>
<proteinExistence type="inferred from homology"/>
<gene>
    <name type="primary">PAM17</name>
    <name type="ordered locus">CNG03540</name>
</gene>
<organism>
    <name type="scientific">Cryptococcus neoformans var. neoformans serotype D (strain JEC21 / ATCC MYA-565)</name>
    <name type="common">Filobasidiella neoformans</name>
    <dbReference type="NCBI Taxonomy" id="214684"/>
    <lineage>
        <taxon>Eukaryota</taxon>
        <taxon>Fungi</taxon>
        <taxon>Dikarya</taxon>
        <taxon>Basidiomycota</taxon>
        <taxon>Agaricomycotina</taxon>
        <taxon>Tremellomycetes</taxon>
        <taxon>Tremellales</taxon>
        <taxon>Cryptococcaceae</taxon>
        <taxon>Cryptococcus</taxon>
        <taxon>Cryptococcus neoformans species complex</taxon>
    </lineage>
</organism>
<protein>
    <recommendedName>
        <fullName>Presequence translocated-associated motor subunit PAM17, mitochondrial</fullName>
    </recommendedName>
</protein>
<comment type="function">
    <text evidence="1">Component of the PAM complex, a complex required for the translocation of transit peptide-containing proteins from the inner membrane into the mitochondrial matrix in an ATP-dependent manner.</text>
</comment>
<comment type="subunit">
    <text evidence="1">Component of the PAM complex, at least composed of mtHsp70 (SSC1), MGE1, TIM44, PAM16, PAM17 and PAM18.</text>
</comment>
<comment type="subcellular location">
    <subcellularLocation>
        <location evidence="1">Mitochondrion inner membrane</location>
        <topology evidence="1">Multi-pass membrane protein</topology>
    </subcellularLocation>
</comment>
<comment type="similarity">
    <text evidence="4">Belongs to the PAM17 family.</text>
</comment>
<sequence length="217" mass="24072">MSRSVFSTLRPVIGQKTTLAPFAFSLRHASSSSSPFSTPTEPTSFHTQPSHSTPTGPLPLTWPSYLSLRRQRRLWSTLTSVPTTFLGLFLGGGYFASLEADPSQLIFGVEPMFVYGGATLGCMALGYLIGPSVGATLFSLTHPSIARGNPAPLEVMDREFYHRIRKNRADPRFQSVQNIVPDFYGEKIVSLSTYRRWLRDQAVYKRKAMHGVPGEDL</sequence>
<feature type="transit peptide" description="Mitochondrion" evidence="2">
    <location>
        <begin position="1"/>
        <end position="28"/>
    </location>
</feature>
<feature type="chain" id="PRO_0000043153" description="Presequence translocated-associated motor subunit PAM17, mitochondrial">
    <location>
        <begin position="29"/>
        <end position="217"/>
    </location>
</feature>
<feature type="transmembrane region" description="Helical" evidence="2">
    <location>
        <begin position="78"/>
        <end position="98"/>
    </location>
</feature>
<feature type="transmembrane region" description="Helical" evidence="2">
    <location>
        <begin position="126"/>
        <end position="146"/>
    </location>
</feature>
<feature type="region of interest" description="Disordered" evidence="3">
    <location>
        <begin position="33"/>
        <end position="56"/>
    </location>
</feature>
<feature type="compositionally biased region" description="Low complexity" evidence="3">
    <location>
        <begin position="33"/>
        <end position="45"/>
    </location>
</feature>
<feature type="compositionally biased region" description="Polar residues" evidence="3">
    <location>
        <begin position="46"/>
        <end position="55"/>
    </location>
</feature>
<name>PAM17_CRYNJ</name>
<reference key="1">
    <citation type="journal article" date="2005" name="Science">
        <title>The genome of the basidiomycetous yeast and human pathogen Cryptococcus neoformans.</title>
        <authorList>
            <person name="Loftus B.J."/>
            <person name="Fung E."/>
            <person name="Roncaglia P."/>
            <person name="Rowley D."/>
            <person name="Amedeo P."/>
            <person name="Bruno D."/>
            <person name="Vamathevan J."/>
            <person name="Miranda M."/>
            <person name="Anderson I.J."/>
            <person name="Fraser J.A."/>
            <person name="Allen J.E."/>
            <person name="Bosdet I.E."/>
            <person name="Brent M.R."/>
            <person name="Chiu R."/>
            <person name="Doering T.L."/>
            <person name="Donlin M.J."/>
            <person name="D'Souza C.A."/>
            <person name="Fox D.S."/>
            <person name="Grinberg V."/>
            <person name="Fu J."/>
            <person name="Fukushima M."/>
            <person name="Haas B.J."/>
            <person name="Huang J.C."/>
            <person name="Janbon G."/>
            <person name="Jones S.J.M."/>
            <person name="Koo H.L."/>
            <person name="Krzywinski M.I."/>
            <person name="Kwon-Chung K.J."/>
            <person name="Lengeler K.B."/>
            <person name="Maiti R."/>
            <person name="Marra M.A."/>
            <person name="Marra R.E."/>
            <person name="Mathewson C.A."/>
            <person name="Mitchell T.G."/>
            <person name="Pertea M."/>
            <person name="Riggs F.R."/>
            <person name="Salzberg S.L."/>
            <person name="Schein J.E."/>
            <person name="Shvartsbeyn A."/>
            <person name="Shin H."/>
            <person name="Shumway M."/>
            <person name="Specht C.A."/>
            <person name="Suh B.B."/>
            <person name="Tenney A."/>
            <person name="Utterback T.R."/>
            <person name="Wickes B.L."/>
            <person name="Wortman J.R."/>
            <person name="Wye N.H."/>
            <person name="Kronstad J.W."/>
            <person name="Lodge J.K."/>
            <person name="Heitman J."/>
            <person name="Davis R.W."/>
            <person name="Fraser C.M."/>
            <person name="Hyman R.W."/>
        </authorList>
    </citation>
    <scope>NUCLEOTIDE SEQUENCE [LARGE SCALE GENOMIC DNA]</scope>
    <source>
        <strain>JEC21 / ATCC MYA-565</strain>
    </source>
</reference>
<keyword id="KW-0472">Membrane</keyword>
<keyword id="KW-0496">Mitochondrion</keyword>
<keyword id="KW-0999">Mitochondrion inner membrane</keyword>
<keyword id="KW-0653">Protein transport</keyword>
<keyword id="KW-1185">Reference proteome</keyword>
<keyword id="KW-0809">Transit peptide</keyword>
<keyword id="KW-0811">Translocation</keyword>
<keyword id="KW-0812">Transmembrane</keyword>
<keyword id="KW-1133">Transmembrane helix</keyword>
<keyword id="KW-0813">Transport</keyword>
<evidence type="ECO:0000250" key="1"/>
<evidence type="ECO:0000255" key="2"/>
<evidence type="ECO:0000256" key="3">
    <source>
        <dbReference type="SAM" id="MobiDB-lite"/>
    </source>
</evidence>
<evidence type="ECO:0000305" key="4"/>